<gene>
    <name evidence="1" type="primary">hemA</name>
    <name type="ordered locus">CHU_0333</name>
</gene>
<dbReference type="EC" id="1.2.1.70" evidence="1"/>
<dbReference type="EMBL" id="CP000383">
    <property type="protein sequence ID" value="ABG57623.1"/>
    <property type="molecule type" value="Genomic_DNA"/>
</dbReference>
<dbReference type="RefSeq" id="WP_011583739.1">
    <property type="nucleotide sequence ID" value="NC_008255.1"/>
</dbReference>
<dbReference type="SMR" id="Q11Y93"/>
<dbReference type="STRING" id="269798.CHU_0333"/>
<dbReference type="KEGG" id="chu:CHU_0333"/>
<dbReference type="eggNOG" id="COG0373">
    <property type="taxonomic scope" value="Bacteria"/>
</dbReference>
<dbReference type="HOGENOM" id="CLU_035113_2_2_10"/>
<dbReference type="OrthoDB" id="110209at2"/>
<dbReference type="UniPathway" id="UPA00251">
    <property type="reaction ID" value="UER00316"/>
</dbReference>
<dbReference type="Proteomes" id="UP000001822">
    <property type="component" value="Chromosome"/>
</dbReference>
<dbReference type="GO" id="GO:0008883">
    <property type="term" value="F:glutamyl-tRNA reductase activity"/>
    <property type="evidence" value="ECO:0007669"/>
    <property type="project" value="UniProtKB-UniRule"/>
</dbReference>
<dbReference type="GO" id="GO:0050661">
    <property type="term" value="F:NADP binding"/>
    <property type="evidence" value="ECO:0007669"/>
    <property type="project" value="InterPro"/>
</dbReference>
<dbReference type="GO" id="GO:0019353">
    <property type="term" value="P:protoporphyrinogen IX biosynthetic process from glutamate"/>
    <property type="evidence" value="ECO:0007669"/>
    <property type="project" value="TreeGrafter"/>
</dbReference>
<dbReference type="Gene3D" id="3.30.460.30">
    <property type="entry name" value="Glutamyl-tRNA reductase, N-terminal domain"/>
    <property type="match status" value="1"/>
</dbReference>
<dbReference type="Gene3D" id="3.40.50.720">
    <property type="entry name" value="NAD(P)-binding Rossmann-like Domain"/>
    <property type="match status" value="1"/>
</dbReference>
<dbReference type="HAMAP" id="MF_00087">
    <property type="entry name" value="Glu_tRNA_reductase"/>
    <property type="match status" value="1"/>
</dbReference>
<dbReference type="InterPro" id="IPR000343">
    <property type="entry name" value="4pyrrol_synth_GluRdtase"/>
</dbReference>
<dbReference type="InterPro" id="IPR015896">
    <property type="entry name" value="4pyrrol_synth_GluRdtase_dimer"/>
</dbReference>
<dbReference type="InterPro" id="IPR015895">
    <property type="entry name" value="4pyrrol_synth_GluRdtase_N"/>
</dbReference>
<dbReference type="InterPro" id="IPR036453">
    <property type="entry name" value="GluRdtase_dimer_dom_sf"/>
</dbReference>
<dbReference type="InterPro" id="IPR036343">
    <property type="entry name" value="GluRdtase_N_sf"/>
</dbReference>
<dbReference type="InterPro" id="IPR036291">
    <property type="entry name" value="NAD(P)-bd_dom_sf"/>
</dbReference>
<dbReference type="InterPro" id="IPR006151">
    <property type="entry name" value="Shikm_DH/Glu-tRNA_Rdtase"/>
</dbReference>
<dbReference type="NCBIfam" id="TIGR01035">
    <property type="entry name" value="hemA"/>
    <property type="match status" value="1"/>
</dbReference>
<dbReference type="PANTHER" id="PTHR43013">
    <property type="entry name" value="GLUTAMYL-TRNA REDUCTASE"/>
    <property type="match status" value="1"/>
</dbReference>
<dbReference type="PANTHER" id="PTHR43013:SF1">
    <property type="entry name" value="GLUTAMYL-TRNA REDUCTASE"/>
    <property type="match status" value="1"/>
</dbReference>
<dbReference type="Pfam" id="PF00745">
    <property type="entry name" value="GlutR_dimer"/>
    <property type="match status" value="1"/>
</dbReference>
<dbReference type="Pfam" id="PF05201">
    <property type="entry name" value="GlutR_N"/>
    <property type="match status" value="1"/>
</dbReference>
<dbReference type="Pfam" id="PF01488">
    <property type="entry name" value="Shikimate_DH"/>
    <property type="match status" value="1"/>
</dbReference>
<dbReference type="PIRSF" id="PIRSF000445">
    <property type="entry name" value="4pyrrol_synth_GluRdtase"/>
    <property type="match status" value="1"/>
</dbReference>
<dbReference type="SUPFAM" id="SSF69742">
    <property type="entry name" value="Glutamyl tRNA-reductase catalytic, N-terminal domain"/>
    <property type="match status" value="1"/>
</dbReference>
<dbReference type="SUPFAM" id="SSF69075">
    <property type="entry name" value="Glutamyl tRNA-reductase dimerization domain"/>
    <property type="match status" value="1"/>
</dbReference>
<dbReference type="SUPFAM" id="SSF51735">
    <property type="entry name" value="NAD(P)-binding Rossmann-fold domains"/>
    <property type="match status" value="1"/>
</dbReference>
<accession>Q11Y93</accession>
<keyword id="KW-0521">NADP</keyword>
<keyword id="KW-0560">Oxidoreductase</keyword>
<keyword id="KW-0627">Porphyrin biosynthesis</keyword>
<keyword id="KW-1185">Reference proteome</keyword>
<protein>
    <recommendedName>
        <fullName evidence="1">Glutamyl-tRNA reductase</fullName>
        <shortName evidence="1">GluTR</shortName>
        <ecNumber evidence="1">1.2.1.70</ecNumber>
    </recommendedName>
</protein>
<reference key="1">
    <citation type="journal article" date="2007" name="Appl. Environ. Microbiol.">
        <title>Genome sequence of the cellulolytic gliding bacterium Cytophaga hutchinsonii.</title>
        <authorList>
            <person name="Xie G."/>
            <person name="Bruce D.C."/>
            <person name="Challacombe J.F."/>
            <person name="Chertkov O."/>
            <person name="Detter J.C."/>
            <person name="Gilna P."/>
            <person name="Han C.S."/>
            <person name="Lucas S."/>
            <person name="Misra M."/>
            <person name="Myers G.L."/>
            <person name="Richardson P."/>
            <person name="Tapia R."/>
            <person name="Thayer N."/>
            <person name="Thompson L.S."/>
            <person name="Brettin T.S."/>
            <person name="Henrissat B."/>
            <person name="Wilson D.B."/>
            <person name="McBride M.J."/>
        </authorList>
    </citation>
    <scope>NUCLEOTIDE SEQUENCE [LARGE SCALE GENOMIC DNA]</scope>
    <source>
        <strain>ATCC 33406 / DSM 1761 / JCM 20678 / CIP 103989 / IAM 12607 / NBRC 15051 / NCIMB 9469 / D465</strain>
    </source>
</reference>
<organism>
    <name type="scientific">Cytophaga hutchinsonii (strain ATCC 33406 / DSM 1761 / CIP 103989 / NBRC 15051 / NCIMB 9469 / D465)</name>
    <dbReference type="NCBI Taxonomy" id="269798"/>
    <lineage>
        <taxon>Bacteria</taxon>
        <taxon>Pseudomonadati</taxon>
        <taxon>Bacteroidota</taxon>
        <taxon>Cytophagia</taxon>
        <taxon>Cytophagales</taxon>
        <taxon>Cytophagaceae</taxon>
        <taxon>Cytophaga</taxon>
    </lineage>
</organism>
<sequence>MISNFKSISLTYRKAPLEIRERVALNEAECKSLMLRIKDFTDTAELLILSTCNRTEIYYTSNEDYSNDIIKLLGVEKNITGLIQQKEYFEIYNEQADAVLHLFEVGIGLDSQVVGDMQIVNQVKYAYQWSADLNLAGPFLHRLMHTIFFTNKRVVQETAFRDGAASVSYATVELSEELLSATPNANILIVGLGEIGADVCRNFKANTSFKNITLTNRSPLKSEALAAECGIEHVPFETLWEAVAKADLVISSVAKEEPLFTKEEIQKLSILSHKYFIDLSVPRSVDARAEELPGIIVYDIDHIQNRSNEALENRLNAIPHVRKIILDSIVEFNEWSKEMEVSPTINKLKNALEQIRKEELSRFVKQLSDEEAKKVDEITKSIMQKIIKLPVLQLKAACKRGEAETLIDVLNDLFNLDKQPEQIRD</sequence>
<evidence type="ECO:0000255" key="1">
    <source>
        <dbReference type="HAMAP-Rule" id="MF_00087"/>
    </source>
</evidence>
<name>HEM1_CYTH3</name>
<proteinExistence type="inferred from homology"/>
<feature type="chain" id="PRO_0000335025" description="Glutamyl-tRNA reductase">
    <location>
        <begin position="1"/>
        <end position="425"/>
    </location>
</feature>
<feature type="active site" description="Nucleophile" evidence="1">
    <location>
        <position position="52"/>
    </location>
</feature>
<feature type="binding site" evidence="1">
    <location>
        <begin position="51"/>
        <end position="54"/>
    </location>
    <ligand>
        <name>substrate</name>
    </ligand>
</feature>
<feature type="binding site" evidence="1">
    <location>
        <position position="111"/>
    </location>
    <ligand>
        <name>substrate</name>
    </ligand>
</feature>
<feature type="binding site" evidence="1">
    <location>
        <begin position="116"/>
        <end position="118"/>
    </location>
    <ligand>
        <name>substrate</name>
    </ligand>
</feature>
<feature type="binding site" evidence="1">
    <location>
        <position position="122"/>
    </location>
    <ligand>
        <name>substrate</name>
    </ligand>
</feature>
<feature type="binding site" evidence="1">
    <location>
        <begin position="191"/>
        <end position="196"/>
    </location>
    <ligand>
        <name>NADP(+)</name>
        <dbReference type="ChEBI" id="CHEBI:58349"/>
    </ligand>
</feature>
<feature type="site" description="Important for activity" evidence="1">
    <location>
        <position position="101"/>
    </location>
</feature>
<comment type="function">
    <text evidence="1">Catalyzes the NADPH-dependent reduction of glutamyl-tRNA(Glu) to glutamate 1-semialdehyde (GSA).</text>
</comment>
<comment type="catalytic activity">
    <reaction evidence="1">
        <text>(S)-4-amino-5-oxopentanoate + tRNA(Glu) + NADP(+) = L-glutamyl-tRNA(Glu) + NADPH + H(+)</text>
        <dbReference type="Rhea" id="RHEA:12344"/>
        <dbReference type="Rhea" id="RHEA-COMP:9663"/>
        <dbReference type="Rhea" id="RHEA-COMP:9680"/>
        <dbReference type="ChEBI" id="CHEBI:15378"/>
        <dbReference type="ChEBI" id="CHEBI:57501"/>
        <dbReference type="ChEBI" id="CHEBI:57783"/>
        <dbReference type="ChEBI" id="CHEBI:58349"/>
        <dbReference type="ChEBI" id="CHEBI:78442"/>
        <dbReference type="ChEBI" id="CHEBI:78520"/>
        <dbReference type="EC" id="1.2.1.70"/>
    </reaction>
</comment>
<comment type="pathway">
    <text evidence="1">Porphyrin-containing compound metabolism; protoporphyrin-IX biosynthesis; 5-aminolevulinate from L-glutamyl-tRNA(Glu): step 1/2.</text>
</comment>
<comment type="subunit">
    <text evidence="1">Homodimer.</text>
</comment>
<comment type="domain">
    <text evidence="1">Possesses an unusual extended V-shaped dimeric structure with each monomer consisting of three distinct domains arranged along a curved 'spinal' alpha-helix. The N-terminal catalytic domain specifically recognizes the glutamate moiety of the substrate. The second domain is the NADPH-binding domain, and the third C-terminal domain is responsible for dimerization.</text>
</comment>
<comment type="miscellaneous">
    <text evidence="1">During catalysis, the active site Cys acts as a nucleophile attacking the alpha-carbonyl group of tRNA-bound glutamate with the formation of a thioester intermediate between enzyme and glutamate, and the concomitant release of tRNA(Glu). The thioester intermediate is finally reduced by direct hydride transfer from NADPH, to form the product GSA.</text>
</comment>
<comment type="similarity">
    <text evidence="1">Belongs to the glutamyl-tRNA reductase family.</text>
</comment>